<evidence type="ECO:0000255" key="1">
    <source>
        <dbReference type="PROSITE-ProRule" id="PRU00303"/>
    </source>
</evidence>
<protein>
    <recommendedName>
        <fullName>Uncharacterized protein jhp_0123</fullName>
    </recommendedName>
</protein>
<name>Y123_HELPJ</name>
<feature type="signal peptide" evidence="1">
    <location>
        <begin position="1"/>
        <end position="16"/>
    </location>
</feature>
<feature type="chain" id="PRO_0000013981" description="Uncharacterized protein jhp_0123">
    <location>
        <begin position="17"/>
        <end position="44"/>
    </location>
</feature>
<gene>
    <name type="ordered locus">jhp_0123</name>
</gene>
<dbReference type="EMBL" id="AE001439">
    <property type="protein sequence ID" value="AAD05700.1"/>
    <property type="molecule type" value="Genomic_DNA"/>
</dbReference>
<dbReference type="RefSeq" id="WP_001222899.1">
    <property type="nucleotide sequence ID" value="NZ_CP011330.1"/>
</dbReference>
<dbReference type="KEGG" id="hpj:jhp_0123"/>
<dbReference type="PATRIC" id="fig|85963.30.peg.902"/>
<dbReference type="Proteomes" id="UP000000804">
    <property type="component" value="Chromosome"/>
</dbReference>
<dbReference type="PROSITE" id="PS51257">
    <property type="entry name" value="PROKAR_LIPOPROTEIN"/>
    <property type="match status" value="1"/>
</dbReference>
<reference key="1">
    <citation type="journal article" date="1999" name="Nature">
        <title>Genomic sequence comparison of two unrelated isolates of the human gastric pathogen Helicobacter pylori.</title>
        <authorList>
            <person name="Alm R.A."/>
            <person name="Ling L.-S.L."/>
            <person name="Moir D.T."/>
            <person name="King B.L."/>
            <person name="Brown E.D."/>
            <person name="Doig P.C."/>
            <person name="Smith D.R."/>
            <person name="Noonan B."/>
            <person name="Guild B.C."/>
            <person name="deJonge B.L."/>
            <person name="Carmel G."/>
            <person name="Tummino P.J."/>
            <person name="Caruso A."/>
            <person name="Uria-Nickelsen M."/>
            <person name="Mills D.M."/>
            <person name="Ives C."/>
            <person name="Gibson R."/>
            <person name="Merberg D."/>
            <person name="Mills S.D."/>
            <person name="Jiang Q."/>
            <person name="Taylor D.E."/>
            <person name="Vovis G.F."/>
            <person name="Trust T.J."/>
        </authorList>
    </citation>
    <scope>NUCLEOTIDE SEQUENCE [LARGE SCALE GENOMIC DNA]</scope>
    <source>
        <strain>J99 / ATCC 700824</strain>
    </source>
</reference>
<organism>
    <name type="scientific">Helicobacter pylori (strain J99 / ATCC 700824)</name>
    <name type="common">Campylobacter pylori J99</name>
    <dbReference type="NCBI Taxonomy" id="85963"/>
    <lineage>
        <taxon>Bacteria</taxon>
        <taxon>Pseudomonadati</taxon>
        <taxon>Campylobacterota</taxon>
        <taxon>Epsilonproteobacteria</taxon>
        <taxon>Campylobacterales</taxon>
        <taxon>Helicobacteraceae</taxon>
        <taxon>Helicobacter</taxon>
    </lineage>
</organism>
<accession>P64656</accession>
<accession>O24948</accession>
<sequence length="44" mass="5023">MRISLLAVILALLFVACHETKKQILQNEADSTPSEKTIWQPEQK</sequence>
<proteinExistence type="inferred from homology"/>
<keyword id="KW-0732">Signal</keyword>